<feature type="chain" id="PRO_0000403154" description="Chromophore lyase CpcT/CpeT 2">
    <location>
        <begin position="1"/>
        <end position="202"/>
    </location>
</feature>
<protein>
    <recommendedName>
        <fullName evidence="1">Chromophore lyase CpcT/CpeT 2</fullName>
        <ecNumber evidence="1">4.-.-.-</ecNumber>
    </recommendedName>
</protein>
<dbReference type="EC" id="4.-.-.-" evidence="1"/>
<dbReference type="EMBL" id="BA000045">
    <property type="protein sequence ID" value="BAC89123.1"/>
    <property type="molecule type" value="Genomic_DNA"/>
</dbReference>
<dbReference type="RefSeq" id="NP_924128.1">
    <property type="nucleotide sequence ID" value="NC_005125.1"/>
</dbReference>
<dbReference type="RefSeq" id="WP_011141182.1">
    <property type="nucleotide sequence ID" value="NC_005125.1"/>
</dbReference>
<dbReference type="SMR" id="Q7NLE2"/>
<dbReference type="STRING" id="251221.gene:10758661"/>
<dbReference type="EnsemblBacteria" id="BAC89123">
    <property type="protein sequence ID" value="BAC89123"/>
    <property type="gene ID" value="BAC89123"/>
</dbReference>
<dbReference type="KEGG" id="gvi:glr1182"/>
<dbReference type="eggNOG" id="ENOG502Z877">
    <property type="taxonomic scope" value="Bacteria"/>
</dbReference>
<dbReference type="HOGENOM" id="CLU_092589_0_0_3"/>
<dbReference type="InParanoid" id="Q7NLE2"/>
<dbReference type="OrthoDB" id="509174at2"/>
<dbReference type="PhylomeDB" id="Q7NLE2"/>
<dbReference type="Proteomes" id="UP000000557">
    <property type="component" value="Chromosome"/>
</dbReference>
<dbReference type="GO" id="GO:0016829">
    <property type="term" value="F:lyase activity"/>
    <property type="evidence" value="ECO:0007669"/>
    <property type="project" value="UniProtKB-KW"/>
</dbReference>
<dbReference type="CDD" id="cd16338">
    <property type="entry name" value="CpcT"/>
    <property type="match status" value="1"/>
</dbReference>
<dbReference type="Gene3D" id="2.40.128.590">
    <property type="entry name" value="CpcT/CpeT domain"/>
    <property type="match status" value="1"/>
</dbReference>
<dbReference type="HAMAP" id="MF_01460">
    <property type="entry name" value="Chrphore_lyase_CpxT"/>
    <property type="match status" value="1"/>
</dbReference>
<dbReference type="InterPro" id="IPR010404">
    <property type="entry name" value="CpcT/CpeT"/>
</dbReference>
<dbReference type="InterPro" id="IPR038672">
    <property type="entry name" value="CpcT/CpeT_sf"/>
</dbReference>
<dbReference type="PANTHER" id="PTHR35137">
    <property type="entry name" value="CHROMOPHORE LYASE CRL, CHLOROPLASTIC"/>
    <property type="match status" value="1"/>
</dbReference>
<dbReference type="PANTHER" id="PTHR35137:SF1">
    <property type="entry name" value="CHROMOPHORE LYASE CRL, CHLOROPLASTIC"/>
    <property type="match status" value="1"/>
</dbReference>
<dbReference type="Pfam" id="PF06206">
    <property type="entry name" value="CpeT"/>
    <property type="match status" value="1"/>
</dbReference>
<keyword id="KW-0456">Lyase</keyword>
<keyword id="KW-1185">Reference proteome</keyword>
<evidence type="ECO:0000255" key="1">
    <source>
        <dbReference type="HAMAP-Rule" id="MF_01460"/>
    </source>
</evidence>
<accession>Q7NLE2</accession>
<gene>
    <name evidence="1" type="primary">cpcT2</name>
    <name type="ordered locus">glr1182</name>
</gene>
<reference key="1">
    <citation type="journal article" date="2003" name="DNA Res.">
        <title>Complete genome structure of Gloeobacter violaceus PCC 7421, a cyanobacterium that lacks thylakoids.</title>
        <authorList>
            <person name="Nakamura Y."/>
            <person name="Kaneko T."/>
            <person name="Sato S."/>
            <person name="Mimuro M."/>
            <person name="Miyashita H."/>
            <person name="Tsuchiya T."/>
            <person name="Sasamoto S."/>
            <person name="Watanabe A."/>
            <person name="Kawashima K."/>
            <person name="Kishida Y."/>
            <person name="Kiyokawa C."/>
            <person name="Kohara M."/>
            <person name="Matsumoto M."/>
            <person name="Matsuno A."/>
            <person name="Nakazaki N."/>
            <person name="Shimpo S."/>
            <person name="Takeuchi C."/>
            <person name="Yamada M."/>
            <person name="Tabata S."/>
        </authorList>
    </citation>
    <scope>NUCLEOTIDE SEQUENCE [LARGE SCALE GENOMIC DNA]</scope>
    <source>
        <strain>ATCC 29082 / PCC 7421</strain>
    </source>
</reference>
<name>CPXT2_GLOVI</name>
<proteinExistence type="inferred from homology"/>
<comment type="function">
    <text evidence="1">Covalently attaches a chromophore to Cys residue(s) of phycobiliproteins.</text>
</comment>
<comment type="similarity">
    <text evidence="1">Belongs to the CpcT/CpeT biliprotein lyase family.</text>
</comment>
<organism>
    <name type="scientific">Gloeobacter violaceus (strain ATCC 29082 / PCC 7421)</name>
    <dbReference type="NCBI Taxonomy" id="251221"/>
    <lineage>
        <taxon>Bacteria</taxon>
        <taxon>Bacillati</taxon>
        <taxon>Cyanobacteriota</taxon>
        <taxon>Cyanophyceae</taxon>
        <taxon>Gloeobacterales</taxon>
        <taxon>Gloeobacteraceae</taxon>
        <taxon>Gloeobacter</taxon>
    </lineage>
</organism>
<sequence length="202" mass="23103">MSSHNLVTLVSWLAGDFSNREQAWDAPAFFSHIRLCMRPLPWQVFEGYGLYSEQADDYDWAHPYRIVVLNLVEQPDGIIECRNYALKDTAPYLGAAREAERARLHRLTPEQLEPLPGCTFLFKREGSLFRGRVRPGKGCRVFRKGRDTYLDGEATVSADYYKSIDRGRDLESDEQVWGSVSGPFHFTKQVDFAPEVLALARP</sequence>